<comment type="function">
    <text evidence="1">Part of a membrane-bound complex that couples electron transfer with translocation of ions across the membrane. Required to maintain the reduced state of SoxR.</text>
</comment>
<comment type="subunit">
    <text evidence="1">The complex is composed of six subunits: RsxA, RsxB, RsxC, RsxD, RsxE and RsxG.</text>
</comment>
<comment type="subcellular location">
    <subcellularLocation>
        <location evidence="1">Cell inner membrane</location>
        <topology evidence="1">Multi-pass membrane protein</topology>
    </subcellularLocation>
</comment>
<comment type="similarity">
    <text evidence="1">Belongs to the NqrDE/RnfAE family.</text>
</comment>
<evidence type="ECO:0000255" key="1">
    <source>
        <dbReference type="HAMAP-Rule" id="MF_00459"/>
    </source>
</evidence>
<sequence length="193" mass="20898">MTDYLLLFVGTVLVNNFVLVKFLGLCPFMGVSKKLETAMGMGLATTFVMTLASICAWLIDTWILIPLNLIYLRTLAFILVIAVVVQFTEMVVRKTSPVLYRLLGIFLPLITTNCAVLGVALLNINLGHNFLQSALYGFSAAVGFSLVMVLFAAIRERLAVADVPAPFRGNAIALITAGLMSLAFMGFSGLVKL</sequence>
<keyword id="KW-0997">Cell inner membrane</keyword>
<keyword id="KW-1003">Cell membrane</keyword>
<keyword id="KW-0249">Electron transport</keyword>
<keyword id="KW-0472">Membrane</keyword>
<keyword id="KW-1185">Reference proteome</keyword>
<keyword id="KW-1278">Translocase</keyword>
<keyword id="KW-0812">Transmembrane</keyword>
<keyword id="KW-1133">Transmembrane helix</keyword>
<keyword id="KW-0813">Transport</keyword>
<accession>P0A767</accession>
<accession>P76181</accession>
<proteinExistence type="inferred from homology"/>
<protein>
    <recommendedName>
        <fullName evidence="1">Ion-translocating oxidoreductase complex subunit A</fullName>
        <ecNumber evidence="1">7.-.-.-</ecNumber>
    </recommendedName>
    <alternativeName>
        <fullName evidence="1">Rsx electron transport complex subunit A</fullName>
    </alternativeName>
</protein>
<organism>
    <name type="scientific">Escherichia coli O6:H1 (strain CFT073 / ATCC 700928 / UPEC)</name>
    <dbReference type="NCBI Taxonomy" id="199310"/>
    <lineage>
        <taxon>Bacteria</taxon>
        <taxon>Pseudomonadati</taxon>
        <taxon>Pseudomonadota</taxon>
        <taxon>Gammaproteobacteria</taxon>
        <taxon>Enterobacterales</taxon>
        <taxon>Enterobacteriaceae</taxon>
        <taxon>Escherichia</taxon>
    </lineage>
</organism>
<reference key="1">
    <citation type="journal article" date="2002" name="Proc. Natl. Acad. Sci. U.S.A.">
        <title>Extensive mosaic structure revealed by the complete genome sequence of uropathogenic Escherichia coli.</title>
        <authorList>
            <person name="Welch R.A."/>
            <person name="Burland V."/>
            <person name="Plunkett G. III"/>
            <person name="Redford P."/>
            <person name="Roesch P."/>
            <person name="Rasko D."/>
            <person name="Buckles E.L."/>
            <person name="Liou S.-R."/>
            <person name="Boutin A."/>
            <person name="Hackett J."/>
            <person name="Stroud D."/>
            <person name="Mayhew G.F."/>
            <person name="Rose D.J."/>
            <person name="Zhou S."/>
            <person name="Schwartz D.C."/>
            <person name="Perna N.T."/>
            <person name="Mobley H.L.T."/>
            <person name="Donnenberg M.S."/>
            <person name="Blattner F.R."/>
        </authorList>
    </citation>
    <scope>NUCLEOTIDE SEQUENCE [LARGE SCALE GENOMIC DNA]</scope>
    <source>
        <strain>CFT073 / ATCC 700928 / UPEC</strain>
    </source>
</reference>
<name>RSXA_ECOL6</name>
<gene>
    <name evidence="1" type="primary">rsxA</name>
    <name type="ordered locus">c2019</name>
</gene>
<feature type="chain" id="PRO_0000214291" description="Ion-translocating oxidoreductase complex subunit A">
    <location>
        <begin position="1"/>
        <end position="193"/>
    </location>
</feature>
<feature type="transmembrane region" description="Helical" evidence="1">
    <location>
        <begin position="5"/>
        <end position="25"/>
    </location>
</feature>
<feature type="transmembrane region" description="Helical" evidence="1">
    <location>
        <begin position="39"/>
        <end position="59"/>
    </location>
</feature>
<feature type="transmembrane region" description="Helical" evidence="1">
    <location>
        <begin position="63"/>
        <end position="83"/>
    </location>
</feature>
<feature type="transmembrane region" description="Helical" evidence="1">
    <location>
        <begin position="102"/>
        <end position="122"/>
    </location>
</feature>
<feature type="transmembrane region" description="Helical" evidence="1">
    <location>
        <begin position="134"/>
        <end position="154"/>
    </location>
</feature>
<feature type="transmembrane region" description="Helical" evidence="1">
    <location>
        <begin position="171"/>
        <end position="191"/>
    </location>
</feature>
<dbReference type="EC" id="7.-.-.-" evidence="1"/>
<dbReference type="EMBL" id="AE014075">
    <property type="protein sequence ID" value="AAN80479.1"/>
    <property type="molecule type" value="Genomic_DNA"/>
</dbReference>
<dbReference type="RefSeq" id="WP_000133193.1">
    <property type="nucleotide sequence ID" value="NZ_CP051263.1"/>
</dbReference>
<dbReference type="SMR" id="P0A767"/>
<dbReference type="STRING" id="199310.c2019"/>
<dbReference type="GeneID" id="89516393"/>
<dbReference type="KEGG" id="ecc:c2019"/>
<dbReference type="eggNOG" id="COG4657">
    <property type="taxonomic scope" value="Bacteria"/>
</dbReference>
<dbReference type="HOGENOM" id="CLU_095255_1_0_6"/>
<dbReference type="BioCyc" id="ECOL199310:C2019-MONOMER"/>
<dbReference type="Proteomes" id="UP000001410">
    <property type="component" value="Chromosome"/>
</dbReference>
<dbReference type="GO" id="GO:0005886">
    <property type="term" value="C:plasma membrane"/>
    <property type="evidence" value="ECO:0007669"/>
    <property type="project" value="UniProtKB-SubCell"/>
</dbReference>
<dbReference type="GO" id="GO:0022900">
    <property type="term" value="P:electron transport chain"/>
    <property type="evidence" value="ECO:0007669"/>
    <property type="project" value="UniProtKB-UniRule"/>
</dbReference>
<dbReference type="HAMAP" id="MF_00459">
    <property type="entry name" value="RsxA_RnfA"/>
    <property type="match status" value="1"/>
</dbReference>
<dbReference type="InterPro" id="IPR011293">
    <property type="entry name" value="Ion_transpt_RnfA/RsxA"/>
</dbReference>
<dbReference type="InterPro" id="IPR003667">
    <property type="entry name" value="NqrDE/RnfAE"/>
</dbReference>
<dbReference type="InterPro" id="IPR050133">
    <property type="entry name" value="NqrDE/RnfAE_oxidrdctase"/>
</dbReference>
<dbReference type="NCBIfam" id="NF003481">
    <property type="entry name" value="PRK05151.1"/>
    <property type="match status" value="1"/>
</dbReference>
<dbReference type="NCBIfam" id="TIGR01943">
    <property type="entry name" value="rnfA"/>
    <property type="match status" value="1"/>
</dbReference>
<dbReference type="PANTHER" id="PTHR30335">
    <property type="entry name" value="INTEGRAL MEMBRANE PROTEIN OF SOXR-REDUCING COMPLEX"/>
    <property type="match status" value="1"/>
</dbReference>
<dbReference type="PANTHER" id="PTHR30335:SF0">
    <property type="entry name" value="ION-TRANSLOCATING OXIDOREDUCTASE COMPLEX SUBUNIT A"/>
    <property type="match status" value="1"/>
</dbReference>
<dbReference type="Pfam" id="PF02508">
    <property type="entry name" value="Rnf-Nqr"/>
    <property type="match status" value="1"/>
</dbReference>
<dbReference type="PIRSF" id="PIRSF006102">
    <property type="entry name" value="NQR_DE"/>
    <property type="match status" value="1"/>
</dbReference>